<sequence length="437" mass="48876">MPATIAVTHLGCEKNRIDTEHMLGLLAQAGYQIDSDEDKAEYVLVNTCSFIGPARTESVRTLVNLAEQGKKIIIAGCLPQMFRDELLKEIPEAVAIVGTGDYHRIVEVVERSRTGERVSLVSATPTYIADEHLPRYRTTTEAVAYLKIAEGCDYRCAFCIIPHLRGDQRSRPIESIVAEAKQLASEGVKELILISQISTNYGLDLYGKPRLADLLRALGEVDIPWVRVHYAYPTGLTDELLTAVEQTANVLPYFDVPLQHSHPEVLRAMNRPWQADLNTRLLERIRERLPEATLRTTLIVGFPGESEAHFAHLCAFVERSEFDHVGVFAYSREENTAAANLEGQIPEAIKKRRRRDLMRLQQTISQRRNASQVGRVVPVLIEQENTQKKVWLGRSARFSPEIDGQVIVCGGAALNQLIPVRITAATPYDLCGEVFQA</sequence>
<organism>
    <name type="scientific">Gloeobacter violaceus (strain ATCC 29082 / PCC 7421)</name>
    <dbReference type="NCBI Taxonomy" id="251221"/>
    <lineage>
        <taxon>Bacteria</taxon>
        <taxon>Bacillati</taxon>
        <taxon>Cyanobacteriota</taxon>
        <taxon>Cyanophyceae</taxon>
        <taxon>Gloeobacterales</taxon>
        <taxon>Gloeobacteraceae</taxon>
        <taxon>Gloeobacter</taxon>
    </lineage>
</organism>
<comment type="function">
    <text evidence="1">Catalyzes the methylthiolation of an aspartic acid residue of ribosomal protein uS12.</text>
</comment>
<comment type="catalytic activity">
    <reaction evidence="1">
        <text>L-aspartate(89)-[ribosomal protein uS12]-hydrogen + (sulfur carrier)-SH + AH2 + 2 S-adenosyl-L-methionine = 3-methylsulfanyl-L-aspartate(89)-[ribosomal protein uS12]-hydrogen + (sulfur carrier)-H + 5'-deoxyadenosine + L-methionine + A + S-adenosyl-L-homocysteine + 2 H(+)</text>
        <dbReference type="Rhea" id="RHEA:37087"/>
        <dbReference type="Rhea" id="RHEA-COMP:10460"/>
        <dbReference type="Rhea" id="RHEA-COMP:10461"/>
        <dbReference type="Rhea" id="RHEA-COMP:14737"/>
        <dbReference type="Rhea" id="RHEA-COMP:14739"/>
        <dbReference type="ChEBI" id="CHEBI:13193"/>
        <dbReference type="ChEBI" id="CHEBI:15378"/>
        <dbReference type="ChEBI" id="CHEBI:17319"/>
        <dbReference type="ChEBI" id="CHEBI:17499"/>
        <dbReference type="ChEBI" id="CHEBI:29917"/>
        <dbReference type="ChEBI" id="CHEBI:29961"/>
        <dbReference type="ChEBI" id="CHEBI:57844"/>
        <dbReference type="ChEBI" id="CHEBI:57856"/>
        <dbReference type="ChEBI" id="CHEBI:59789"/>
        <dbReference type="ChEBI" id="CHEBI:64428"/>
        <dbReference type="ChEBI" id="CHEBI:73599"/>
        <dbReference type="EC" id="2.8.4.4"/>
    </reaction>
</comment>
<comment type="cofactor">
    <cofactor evidence="1">
        <name>[4Fe-4S] cluster</name>
        <dbReference type="ChEBI" id="CHEBI:49883"/>
    </cofactor>
    <text evidence="1">Binds 2 [4Fe-4S] clusters. One cluster is coordinated with 3 cysteines and an exchangeable S-adenosyl-L-methionine.</text>
</comment>
<comment type="subcellular location">
    <subcellularLocation>
        <location evidence="1">Cytoplasm</location>
    </subcellularLocation>
</comment>
<comment type="similarity">
    <text evidence="1">Belongs to the methylthiotransferase family. RimO subfamily.</text>
</comment>
<name>RIMO_GLOVI</name>
<dbReference type="EC" id="2.8.4.4" evidence="1"/>
<dbReference type="EMBL" id="BA000045">
    <property type="protein sequence ID" value="BAC92258.1"/>
    <property type="molecule type" value="Genomic_DNA"/>
</dbReference>
<dbReference type="RefSeq" id="NP_927263.1">
    <property type="nucleotide sequence ID" value="NC_005125.1"/>
</dbReference>
<dbReference type="RefSeq" id="WP_011144301.1">
    <property type="nucleotide sequence ID" value="NC_005125.1"/>
</dbReference>
<dbReference type="SMR" id="Q7NDB8"/>
<dbReference type="STRING" id="251221.gene:10761836"/>
<dbReference type="EnsemblBacteria" id="BAC92258">
    <property type="protein sequence ID" value="BAC92258"/>
    <property type="gene ID" value="BAC92258"/>
</dbReference>
<dbReference type="KEGG" id="gvi:gll4317"/>
<dbReference type="PATRIC" id="fig|251221.4.peg.4346"/>
<dbReference type="eggNOG" id="COG0621">
    <property type="taxonomic scope" value="Bacteria"/>
</dbReference>
<dbReference type="HOGENOM" id="CLU_018697_0_1_3"/>
<dbReference type="InParanoid" id="Q7NDB8"/>
<dbReference type="OrthoDB" id="9805215at2"/>
<dbReference type="PhylomeDB" id="Q7NDB8"/>
<dbReference type="Proteomes" id="UP000000557">
    <property type="component" value="Chromosome"/>
</dbReference>
<dbReference type="GO" id="GO:0005829">
    <property type="term" value="C:cytosol"/>
    <property type="evidence" value="ECO:0000318"/>
    <property type="project" value="GO_Central"/>
</dbReference>
<dbReference type="GO" id="GO:0051539">
    <property type="term" value="F:4 iron, 4 sulfur cluster binding"/>
    <property type="evidence" value="ECO:0000318"/>
    <property type="project" value="GO_Central"/>
</dbReference>
<dbReference type="GO" id="GO:0035599">
    <property type="term" value="F:aspartic acid methylthiotransferase activity"/>
    <property type="evidence" value="ECO:0000318"/>
    <property type="project" value="GO_Central"/>
</dbReference>
<dbReference type="GO" id="GO:0046872">
    <property type="term" value="F:metal ion binding"/>
    <property type="evidence" value="ECO:0007669"/>
    <property type="project" value="UniProtKB-KW"/>
</dbReference>
<dbReference type="GO" id="GO:0103039">
    <property type="term" value="F:protein methylthiotransferase activity"/>
    <property type="evidence" value="ECO:0007669"/>
    <property type="project" value="UniProtKB-EC"/>
</dbReference>
<dbReference type="GO" id="GO:0006400">
    <property type="term" value="P:tRNA modification"/>
    <property type="evidence" value="ECO:0007669"/>
    <property type="project" value="InterPro"/>
</dbReference>
<dbReference type="CDD" id="cd01335">
    <property type="entry name" value="Radical_SAM"/>
    <property type="match status" value="1"/>
</dbReference>
<dbReference type="FunFam" id="3.80.30.20:FF:000001">
    <property type="entry name" value="tRNA-2-methylthio-N(6)-dimethylallyladenosine synthase 2"/>
    <property type="match status" value="1"/>
</dbReference>
<dbReference type="Gene3D" id="3.40.50.12160">
    <property type="entry name" value="Methylthiotransferase, N-terminal domain"/>
    <property type="match status" value="1"/>
</dbReference>
<dbReference type="Gene3D" id="2.40.50.140">
    <property type="entry name" value="Nucleic acid-binding proteins"/>
    <property type="match status" value="1"/>
</dbReference>
<dbReference type="Gene3D" id="3.80.30.20">
    <property type="entry name" value="tm_1862 like domain"/>
    <property type="match status" value="1"/>
</dbReference>
<dbReference type="HAMAP" id="MF_01865">
    <property type="entry name" value="MTTase_RimO"/>
    <property type="match status" value="1"/>
</dbReference>
<dbReference type="InterPro" id="IPR006638">
    <property type="entry name" value="Elp3/MiaA/NifB-like_rSAM"/>
</dbReference>
<dbReference type="InterPro" id="IPR005839">
    <property type="entry name" value="Methylthiotransferase"/>
</dbReference>
<dbReference type="InterPro" id="IPR020612">
    <property type="entry name" value="Methylthiotransferase_CS"/>
</dbReference>
<dbReference type="InterPro" id="IPR013848">
    <property type="entry name" value="Methylthiotransferase_N"/>
</dbReference>
<dbReference type="InterPro" id="IPR038135">
    <property type="entry name" value="Methylthiotransferase_N_sf"/>
</dbReference>
<dbReference type="InterPro" id="IPR012340">
    <property type="entry name" value="NA-bd_OB-fold"/>
</dbReference>
<dbReference type="InterPro" id="IPR005840">
    <property type="entry name" value="Ribosomal_uS12_MeSTrfase_RimO"/>
</dbReference>
<dbReference type="InterPro" id="IPR007197">
    <property type="entry name" value="rSAM"/>
</dbReference>
<dbReference type="InterPro" id="IPR023404">
    <property type="entry name" value="rSAM_horseshoe"/>
</dbReference>
<dbReference type="InterPro" id="IPR002792">
    <property type="entry name" value="TRAM_dom"/>
</dbReference>
<dbReference type="NCBIfam" id="TIGR01125">
    <property type="entry name" value="30S ribosomal protein S12 methylthiotransferase RimO"/>
    <property type="match status" value="1"/>
</dbReference>
<dbReference type="NCBIfam" id="TIGR00089">
    <property type="entry name" value="MiaB/RimO family radical SAM methylthiotransferase"/>
    <property type="match status" value="1"/>
</dbReference>
<dbReference type="PANTHER" id="PTHR43837">
    <property type="entry name" value="RIBOSOMAL PROTEIN S12 METHYLTHIOTRANSFERASE RIMO"/>
    <property type="match status" value="1"/>
</dbReference>
<dbReference type="PANTHER" id="PTHR43837:SF1">
    <property type="entry name" value="RIBOSOMAL PROTEIN US12 METHYLTHIOTRANSFERASE RIMO"/>
    <property type="match status" value="1"/>
</dbReference>
<dbReference type="Pfam" id="PF04055">
    <property type="entry name" value="Radical_SAM"/>
    <property type="match status" value="1"/>
</dbReference>
<dbReference type="Pfam" id="PF18693">
    <property type="entry name" value="TRAM_2"/>
    <property type="match status" value="1"/>
</dbReference>
<dbReference type="Pfam" id="PF00919">
    <property type="entry name" value="UPF0004"/>
    <property type="match status" value="1"/>
</dbReference>
<dbReference type="SFLD" id="SFLDG01082">
    <property type="entry name" value="B12-binding_domain_containing"/>
    <property type="match status" value="1"/>
</dbReference>
<dbReference type="SFLD" id="SFLDS00029">
    <property type="entry name" value="Radical_SAM"/>
    <property type="match status" value="1"/>
</dbReference>
<dbReference type="SFLD" id="SFLDF00274">
    <property type="entry name" value="ribosomal_protein_S12_methylth"/>
    <property type="match status" value="1"/>
</dbReference>
<dbReference type="SMART" id="SM00729">
    <property type="entry name" value="Elp3"/>
    <property type="match status" value="1"/>
</dbReference>
<dbReference type="SUPFAM" id="SSF102114">
    <property type="entry name" value="Radical SAM enzymes"/>
    <property type="match status" value="1"/>
</dbReference>
<dbReference type="PROSITE" id="PS51449">
    <property type="entry name" value="MTTASE_N"/>
    <property type="match status" value="1"/>
</dbReference>
<dbReference type="PROSITE" id="PS01278">
    <property type="entry name" value="MTTASE_RADICAL"/>
    <property type="match status" value="1"/>
</dbReference>
<dbReference type="PROSITE" id="PS51918">
    <property type="entry name" value="RADICAL_SAM"/>
    <property type="match status" value="1"/>
</dbReference>
<dbReference type="PROSITE" id="PS50926">
    <property type="entry name" value="TRAM"/>
    <property type="match status" value="1"/>
</dbReference>
<gene>
    <name evidence="1" type="primary">rimO</name>
    <name type="ordered locus">gll4317</name>
</gene>
<reference key="1">
    <citation type="journal article" date="2003" name="DNA Res.">
        <title>Complete genome structure of Gloeobacter violaceus PCC 7421, a cyanobacterium that lacks thylakoids.</title>
        <authorList>
            <person name="Nakamura Y."/>
            <person name="Kaneko T."/>
            <person name="Sato S."/>
            <person name="Mimuro M."/>
            <person name="Miyashita H."/>
            <person name="Tsuchiya T."/>
            <person name="Sasamoto S."/>
            <person name="Watanabe A."/>
            <person name="Kawashima K."/>
            <person name="Kishida Y."/>
            <person name="Kiyokawa C."/>
            <person name="Kohara M."/>
            <person name="Matsumoto M."/>
            <person name="Matsuno A."/>
            <person name="Nakazaki N."/>
            <person name="Shimpo S."/>
            <person name="Takeuchi C."/>
            <person name="Yamada M."/>
            <person name="Tabata S."/>
        </authorList>
    </citation>
    <scope>NUCLEOTIDE SEQUENCE [LARGE SCALE GENOMIC DNA]</scope>
    <source>
        <strain>ATCC 29082 / PCC 7421</strain>
    </source>
</reference>
<keyword id="KW-0004">4Fe-4S</keyword>
<keyword id="KW-0963">Cytoplasm</keyword>
<keyword id="KW-0408">Iron</keyword>
<keyword id="KW-0411">Iron-sulfur</keyword>
<keyword id="KW-0479">Metal-binding</keyword>
<keyword id="KW-1185">Reference proteome</keyword>
<keyword id="KW-0949">S-adenosyl-L-methionine</keyword>
<keyword id="KW-0808">Transferase</keyword>
<accession>Q7NDB8</accession>
<protein>
    <recommendedName>
        <fullName evidence="1">Ribosomal protein uS12 methylthiotransferase RimO</fullName>
        <shortName evidence="1">uS12 MTTase</shortName>
        <shortName evidence="1">uS12 methylthiotransferase</shortName>
        <ecNumber evidence="1">2.8.4.4</ecNumber>
    </recommendedName>
    <alternativeName>
        <fullName evidence="1">Ribosomal protein uS12 (aspartate-C(3))-methylthiotransferase</fullName>
    </alternativeName>
    <alternativeName>
        <fullName evidence="1">Ribosome maturation factor RimO</fullName>
    </alternativeName>
</protein>
<proteinExistence type="inferred from homology"/>
<evidence type="ECO:0000255" key="1">
    <source>
        <dbReference type="HAMAP-Rule" id="MF_01865"/>
    </source>
</evidence>
<evidence type="ECO:0000255" key="2">
    <source>
        <dbReference type="PROSITE-ProRule" id="PRU01266"/>
    </source>
</evidence>
<feature type="chain" id="PRO_0000374848" description="Ribosomal protein uS12 methylthiotransferase RimO">
    <location>
        <begin position="1"/>
        <end position="437"/>
    </location>
</feature>
<feature type="domain" description="MTTase N-terminal" evidence="1">
    <location>
        <begin position="3"/>
        <end position="114"/>
    </location>
</feature>
<feature type="domain" description="Radical SAM core" evidence="2">
    <location>
        <begin position="138"/>
        <end position="367"/>
    </location>
</feature>
<feature type="domain" description="TRAM" evidence="1">
    <location>
        <begin position="370"/>
        <end position="436"/>
    </location>
</feature>
<feature type="binding site" evidence="1">
    <location>
        <position position="12"/>
    </location>
    <ligand>
        <name>[4Fe-4S] cluster</name>
        <dbReference type="ChEBI" id="CHEBI:49883"/>
        <label>1</label>
    </ligand>
</feature>
<feature type="binding site" evidence="1">
    <location>
        <position position="48"/>
    </location>
    <ligand>
        <name>[4Fe-4S] cluster</name>
        <dbReference type="ChEBI" id="CHEBI:49883"/>
        <label>1</label>
    </ligand>
</feature>
<feature type="binding site" evidence="1">
    <location>
        <position position="77"/>
    </location>
    <ligand>
        <name>[4Fe-4S] cluster</name>
        <dbReference type="ChEBI" id="CHEBI:49883"/>
        <label>1</label>
    </ligand>
</feature>
<feature type="binding site" evidence="1">
    <location>
        <position position="152"/>
    </location>
    <ligand>
        <name>[4Fe-4S] cluster</name>
        <dbReference type="ChEBI" id="CHEBI:49883"/>
        <label>2</label>
        <note>4Fe-4S-S-AdoMet</note>
    </ligand>
</feature>
<feature type="binding site" evidence="1">
    <location>
        <position position="156"/>
    </location>
    <ligand>
        <name>[4Fe-4S] cluster</name>
        <dbReference type="ChEBI" id="CHEBI:49883"/>
        <label>2</label>
        <note>4Fe-4S-S-AdoMet</note>
    </ligand>
</feature>
<feature type="binding site" evidence="1">
    <location>
        <position position="159"/>
    </location>
    <ligand>
        <name>[4Fe-4S] cluster</name>
        <dbReference type="ChEBI" id="CHEBI:49883"/>
        <label>2</label>
        <note>4Fe-4S-S-AdoMet</note>
    </ligand>
</feature>